<organism>
    <name type="scientific">Bordetella pertussis (strain Tohama I / ATCC BAA-589 / NCTC 13251)</name>
    <dbReference type="NCBI Taxonomy" id="257313"/>
    <lineage>
        <taxon>Bacteria</taxon>
        <taxon>Pseudomonadati</taxon>
        <taxon>Pseudomonadota</taxon>
        <taxon>Betaproteobacteria</taxon>
        <taxon>Burkholderiales</taxon>
        <taxon>Alcaligenaceae</taxon>
        <taxon>Bordetella</taxon>
    </lineage>
</organism>
<protein>
    <recommendedName>
        <fullName evidence="1">Phosphate import ATP-binding protein PstB</fullName>
        <ecNumber evidence="1">7.3.2.1</ecNumber>
    </recommendedName>
    <alternativeName>
        <fullName evidence="1">ABC phosphate transporter</fullName>
    </alternativeName>
    <alternativeName>
        <fullName evidence="1">Phosphate-transporting ATPase</fullName>
    </alternativeName>
</protein>
<reference key="1">
    <citation type="journal article" date="2003" name="Nat. Genet.">
        <title>Comparative analysis of the genome sequences of Bordetella pertussis, Bordetella parapertussis and Bordetella bronchiseptica.</title>
        <authorList>
            <person name="Parkhill J."/>
            <person name="Sebaihia M."/>
            <person name="Preston A."/>
            <person name="Murphy L.D."/>
            <person name="Thomson N.R."/>
            <person name="Harris D.E."/>
            <person name="Holden M.T.G."/>
            <person name="Churcher C.M."/>
            <person name="Bentley S.D."/>
            <person name="Mungall K.L."/>
            <person name="Cerdeno-Tarraga A.-M."/>
            <person name="Temple L."/>
            <person name="James K.D."/>
            <person name="Harris B."/>
            <person name="Quail M.A."/>
            <person name="Achtman M."/>
            <person name="Atkin R."/>
            <person name="Baker S."/>
            <person name="Basham D."/>
            <person name="Bason N."/>
            <person name="Cherevach I."/>
            <person name="Chillingworth T."/>
            <person name="Collins M."/>
            <person name="Cronin A."/>
            <person name="Davis P."/>
            <person name="Doggett J."/>
            <person name="Feltwell T."/>
            <person name="Goble A."/>
            <person name="Hamlin N."/>
            <person name="Hauser H."/>
            <person name="Holroyd S."/>
            <person name="Jagels K."/>
            <person name="Leather S."/>
            <person name="Moule S."/>
            <person name="Norberczak H."/>
            <person name="O'Neil S."/>
            <person name="Ormond D."/>
            <person name="Price C."/>
            <person name="Rabbinowitsch E."/>
            <person name="Rutter S."/>
            <person name="Sanders M."/>
            <person name="Saunders D."/>
            <person name="Seeger K."/>
            <person name="Sharp S."/>
            <person name="Simmonds M."/>
            <person name="Skelton J."/>
            <person name="Squares R."/>
            <person name="Squares S."/>
            <person name="Stevens K."/>
            <person name="Unwin L."/>
            <person name="Whitehead S."/>
            <person name="Barrell B.G."/>
            <person name="Maskell D.J."/>
        </authorList>
    </citation>
    <scope>NUCLEOTIDE SEQUENCE [LARGE SCALE GENOMIC DNA]</scope>
    <source>
        <strain>Tohama I / ATCC BAA-589 / NCTC 13251</strain>
    </source>
</reference>
<feature type="chain" id="PRO_0000092791" description="Phosphate import ATP-binding protein PstB">
    <location>
        <begin position="1"/>
        <end position="258"/>
    </location>
</feature>
<feature type="domain" description="ABC transporter" evidence="1">
    <location>
        <begin position="12"/>
        <end position="253"/>
    </location>
</feature>
<feature type="binding site" evidence="1">
    <location>
        <begin position="44"/>
        <end position="51"/>
    </location>
    <ligand>
        <name>ATP</name>
        <dbReference type="ChEBI" id="CHEBI:30616"/>
    </ligand>
</feature>
<gene>
    <name evidence="1" type="primary">pstB</name>
    <name type="synonym">phoT</name>
    <name type="ordered locus">BP1068</name>
</gene>
<evidence type="ECO:0000255" key="1">
    <source>
        <dbReference type="HAMAP-Rule" id="MF_01702"/>
    </source>
</evidence>
<evidence type="ECO:0000305" key="2"/>
<keyword id="KW-0067">ATP-binding</keyword>
<keyword id="KW-0997">Cell inner membrane</keyword>
<keyword id="KW-1003">Cell membrane</keyword>
<keyword id="KW-0472">Membrane</keyword>
<keyword id="KW-0547">Nucleotide-binding</keyword>
<keyword id="KW-0592">Phosphate transport</keyword>
<keyword id="KW-1185">Reference proteome</keyword>
<keyword id="KW-1278">Translocase</keyword>
<keyword id="KW-0813">Transport</keyword>
<sequence>MENTATAAKAKLEVKNLNFYYGKFHAIRNVNMSIRENKVTAFIGPSGCGKSTLLRTFNRMFELYPGQRAEGEILLDGENLLTSKTDISLIRAKVGMVFQKPTPFPMSIYDNIAFGVRLFERLSKGEMDERVEWALSKAALWNEVKDKLHQSGNSLSGGQQQRLCIARGVAIKPEVLLLDEPCSALDPISTAKIEELIAELKHEYTVVIVTHNMQQAARCSDYTAYMYLGELMEYGATDQIFVKPARKETEDYITGRFG</sequence>
<dbReference type="EC" id="7.3.2.1" evidence="1"/>
<dbReference type="EMBL" id="BX640414">
    <property type="protein sequence ID" value="CAE41367.1"/>
    <property type="status" value="ALT_INIT"/>
    <property type="molecule type" value="Genomic_DNA"/>
</dbReference>
<dbReference type="RefSeq" id="NP_879852.1">
    <property type="nucleotide sequence ID" value="NC_002929.2"/>
</dbReference>
<dbReference type="RefSeq" id="WP_010930167.1">
    <property type="nucleotide sequence ID" value="NZ_CP039022.1"/>
</dbReference>
<dbReference type="SMR" id="Q7VZ66"/>
<dbReference type="STRING" id="257313.BP1068"/>
<dbReference type="PaxDb" id="257313-BP1068"/>
<dbReference type="GeneID" id="69600992"/>
<dbReference type="KEGG" id="bpe:BP1068"/>
<dbReference type="PATRIC" id="fig|257313.5.peg.1142"/>
<dbReference type="eggNOG" id="COG1117">
    <property type="taxonomic scope" value="Bacteria"/>
</dbReference>
<dbReference type="HOGENOM" id="CLU_000604_1_22_4"/>
<dbReference type="Proteomes" id="UP000002676">
    <property type="component" value="Chromosome"/>
</dbReference>
<dbReference type="GO" id="GO:0005886">
    <property type="term" value="C:plasma membrane"/>
    <property type="evidence" value="ECO:0007669"/>
    <property type="project" value="UniProtKB-SubCell"/>
</dbReference>
<dbReference type="GO" id="GO:0005524">
    <property type="term" value="F:ATP binding"/>
    <property type="evidence" value="ECO:0007669"/>
    <property type="project" value="UniProtKB-KW"/>
</dbReference>
<dbReference type="GO" id="GO:0016887">
    <property type="term" value="F:ATP hydrolysis activity"/>
    <property type="evidence" value="ECO:0007669"/>
    <property type="project" value="InterPro"/>
</dbReference>
<dbReference type="GO" id="GO:0015415">
    <property type="term" value="F:ATPase-coupled phosphate ion transmembrane transporter activity"/>
    <property type="evidence" value="ECO:0007669"/>
    <property type="project" value="UniProtKB-EC"/>
</dbReference>
<dbReference type="GO" id="GO:0035435">
    <property type="term" value="P:phosphate ion transmembrane transport"/>
    <property type="evidence" value="ECO:0007669"/>
    <property type="project" value="InterPro"/>
</dbReference>
<dbReference type="CDD" id="cd03260">
    <property type="entry name" value="ABC_PstB_phosphate_transporter"/>
    <property type="match status" value="1"/>
</dbReference>
<dbReference type="FunFam" id="3.40.50.300:FF:000132">
    <property type="entry name" value="Phosphate import ATP-binding protein PstB"/>
    <property type="match status" value="1"/>
</dbReference>
<dbReference type="Gene3D" id="3.40.50.300">
    <property type="entry name" value="P-loop containing nucleotide triphosphate hydrolases"/>
    <property type="match status" value="1"/>
</dbReference>
<dbReference type="InterPro" id="IPR003593">
    <property type="entry name" value="AAA+_ATPase"/>
</dbReference>
<dbReference type="InterPro" id="IPR003439">
    <property type="entry name" value="ABC_transporter-like_ATP-bd"/>
</dbReference>
<dbReference type="InterPro" id="IPR017871">
    <property type="entry name" value="ABC_transporter-like_CS"/>
</dbReference>
<dbReference type="InterPro" id="IPR027417">
    <property type="entry name" value="P-loop_NTPase"/>
</dbReference>
<dbReference type="InterPro" id="IPR005670">
    <property type="entry name" value="PstB-like"/>
</dbReference>
<dbReference type="NCBIfam" id="TIGR00972">
    <property type="entry name" value="3a0107s01c2"/>
    <property type="match status" value="1"/>
</dbReference>
<dbReference type="PANTHER" id="PTHR43423">
    <property type="entry name" value="ABC TRANSPORTER I FAMILY MEMBER 17"/>
    <property type="match status" value="1"/>
</dbReference>
<dbReference type="PANTHER" id="PTHR43423:SF3">
    <property type="entry name" value="PHOSPHATE IMPORT ATP-BINDING PROTEIN PSTB"/>
    <property type="match status" value="1"/>
</dbReference>
<dbReference type="Pfam" id="PF00005">
    <property type="entry name" value="ABC_tran"/>
    <property type="match status" value="1"/>
</dbReference>
<dbReference type="SMART" id="SM00382">
    <property type="entry name" value="AAA"/>
    <property type="match status" value="1"/>
</dbReference>
<dbReference type="SUPFAM" id="SSF52540">
    <property type="entry name" value="P-loop containing nucleoside triphosphate hydrolases"/>
    <property type="match status" value="1"/>
</dbReference>
<dbReference type="PROSITE" id="PS00211">
    <property type="entry name" value="ABC_TRANSPORTER_1"/>
    <property type="match status" value="1"/>
</dbReference>
<dbReference type="PROSITE" id="PS50893">
    <property type="entry name" value="ABC_TRANSPORTER_2"/>
    <property type="match status" value="1"/>
</dbReference>
<dbReference type="PROSITE" id="PS51238">
    <property type="entry name" value="PSTB"/>
    <property type="match status" value="1"/>
</dbReference>
<accession>Q7VZ66</accession>
<proteinExistence type="inferred from homology"/>
<name>PSTB_BORPE</name>
<comment type="function">
    <text evidence="1">Part of the ABC transporter complex PstSACB involved in phosphate import. Responsible for energy coupling to the transport system.</text>
</comment>
<comment type="catalytic activity">
    <reaction evidence="1">
        <text>phosphate(out) + ATP + H2O = ADP + 2 phosphate(in) + H(+)</text>
        <dbReference type="Rhea" id="RHEA:24440"/>
        <dbReference type="ChEBI" id="CHEBI:15377"/>
        <dbReference type="ChEBI" id="CHEBI:15378"/>
        <dbReference type="ChEBI" id="CHEBI:30616"/>
        <dbReference type="ChEBI" id="CHEBI:43474"/>
        <dbReference type="ChEBI" id="CHEBI:456216"/>
        <dbReference type="EC" id="7.3.2.1"/>
    </reaction>
</comment>
<comment type="subunit">
    <text evidence="1">The complex is composed of two ATP-binding proteins (PstB), two transmembrane proteins (PstC and PstA) and a solute-binding protein (PstS).</text>
</comment>
<comment type="subcellular location">
    <subcellularLocation>
        <location evidence="1">Cell inner membrane</location>
        <topology evidence="1">Peripheral membrane protein</topology>
    </subcellularLocation>
</comment>
<comment type="similarity">
    <text evidence="1">Belongs to the ABC transporter superfamily. Phosphate importer (TC 3.A.1.7) family.</text>
</comment>
<comment type="sequence caution" evidence="2">
    <conflict type="erroneous initiation">
        <sequence resource="EMBL-CDS" id="CAE41367"/>
    </conflict>
</comment>